<feature type="chain" id="PRO_0000061155" description="Cytochrome b">
    <location>
        <begin position="1"/>
        <end position="379"/>
    </location>
</feature>
<feature type="transmembrane region" description="Helical" evidence="2">
    <location>
        <begin position="33"/>
        <end position="53"/>
    </location>
</feature>
<feature type="transmembrane region" description="Helical" evidence="2">
    <location>
        <begin position="77"/>
        <end position="98"/>
    </location>
</feature>
<feature type="transmembrane region" description="Helical" evidence="2">
    <location>
        <begin position="113"/>
        <end position="133"/>
    </location>
</feature>
<feature type="transmembrane region" description="Helical" evidence="2">
    <location>
        <begin position="178"/>
        <end position="198"/>
    </location>
</feature>
<feature type="transmembrane region" description="Helical" evidence="2">
    <location>
        <begin position="226"/>
        <end position="246"/>
    </location>
</feature>
<feature type="transmembrane region" description="Helical" evidence="2">
    <location>
        <begin position="288"/>
        <end position="308"/>
    </location>
</feature>
<feature type="transmembrane region" description="Helical" evidence="2">
    <location>
        <begin position="320"/>
        <end position="340"/>
    </location>
</feature>
<feature type="transmembrane region" description="Helical" evidence="2">
    <location>
        <begin position="347"/>
        <end position="367"/>
    </location>
</feature>
<feature type="binding site" description="axial binding residue" evidence="2">
    <location>
        <position position="83"/>
    </location>
    <ligand>
        <name>heme b</name>
        <dbReference type="ChEBI" id="CHEBI:60344"/>
        <label>b562</label>
    </ligand>
    <ligandPart>
        <name>Fe</name>
        <dbReference type="ChEBI" id="CHEBI:18248"/>
    </ligandPart>
</feature>
<feature type="binding site" description="axial binding residue" evidence="2">
    <location>
        <position position="97"/>
    </location>
    <ligand>
        <name>heme b</name>
        <dbReference type="ChEBI" id="CHEBI:60344"/>
        <label>b566</label>
    </ligand>
    <ligandPart>
        <name>Fe</name>
        <dbReference type="ChEBI" id="CHEBI:18248"/>
    </ligandPart>
</feature>
<feature type="binding site" description="axial binding residue" evidence="2">
    <location>
        <position position="182"/>
    </location>
    <ligand>
        <name>heme b</name>
        <dbReference type="ChEBI" id="CHEBI:60344"/>
        <label>b562</label>
    </ligand>
    <ligandPart>
        <name>Fe</name>
        <dbReference type="ChEBI" id="CHEBI:18248"/>
    </ligandPart>
</feature>
<feature type="binding site" description="axial binding residue" evidence="2">
    <location>
        <position position="196"/>
    </location>
    <ligand>
        <name>heme b</name>
        <dbReference type="ChEBI" id="CHEBI:60344"/>
        <label>b566</label>
    </ligand>
    <ligandPart>
        <name>Fe</name>
        <dbReference type="ChEBI" id="CHEBI:18248"/>
    </ligandPart>
</feature>
<feature type="binding site" evidence="2">
    <location>
        <position position="201"/>
    </location>
    <ligand>
        <name>a ubiquinone</name>
        <dbReference type="ChEBI" id="CHEBI:16389"/>
    </ligand>
</feature>
<feature type="sequence variant" description="In strain: Isolate USNM_575170.">
    <original>I</original>
    <variation>V</variation>
    <location>
        <position position="238"/>
    </location>
</feature>
<organism>
    <name type="scientific">Marmota flaviventris</name>
    <name type="common">Yellow-bellied marmot</name>
    <dbReference type="NCBI Taxonomy" id="93162"/>
    <lineage>
        <taxon>Eukaryota</taxon>
        <taxon>Metazoa</taxon>
        <taxon>Chordata</taxon>
        <taxon>Craniata</taxon>
        <taxon>Vertebrata</taxon>
        <taxon>Euteleostomi</taxon>
        <taxon>Mammalia</taxon>
        <taxon>Eutheria</taxon>
        <taxon>Euarchontoglires</taxon>
        <taxon>Glires</taxon>
        <taxon>Rodentia</taxon>
        <taxon>Sciuromorpha</taxon>
        <taxon>Sciuridae</taxon>
        <taxon>Xerinae</taxon>
        <taxon>Marmotini</taxon>
        <taxon>Marmota</taxon>
    </lineage>
</organism>
<comment type="function">
    <text evidence="2">Component of the ubiquinol-cytochrome c reductase complex (complex III or cytochrome b-c1 complex) that is part of the mitochondrial respiratory chain. The b-c1 complex mediates electron transfer from ubiquinol to cytochrome c. Contributes to the generation of a proton gradient across the mitochondrial membrane that is then used for ATP synthesis.</text>
</comment>
<comment type="cofactor">
    <cofactor evidence="2">
        <name>heme b</name>
        <dbReference type="ChEBI" id="CHEBI:60344"/>
    </cofactor>
    <text evidence="2">Binds 2 heme b groups non-covalently.</text>
</comment>
<comment type="subunit">
    <text evidence="2">The cytochrome bc1 complex contains 11 subunits: 3 respiratory subunits (MT-CYB, CYC1 and UQCRFS1), 2 core proteins (UQCRC1 and UQCRC2) and 6 low-molecular weight proteins (UQCRH/QCR6, UQCRB/QCR7, UQCRQ/QCR8, UQCR10/QCR9, UQCR11/QCR10 and a cleavage product of UQCRFS1). This cytochrome bc1 complex then forms a dimer.</text>
</comment>
<comment type="subcellular location">
    <subcellularLocation>
        <location evidence="2">Mitochondrion inner membrane</location>
        <topology evidence="2">Multi-pass membrane protein</topology>
    </subcellularLocation>
</comment>
<comment type="miscellaneous">
    <text evidence="1">Heme 1 (or BL or b562) is low-potential and absorbs at about 562 nm, and heme 2 (or BH or b566) is high-potential and absorbs at about 566 nm.</text>
</comment>
<comment type="similarity">
    <text evidence="3 4">Belongs to the cytochrome b family.</text>
</comment>
<comment type="caution">
    <text evidence="2">The full-length protein contains only eight transmembrane helices, not nine as predicted by bioinformatics tools.</text>
</comment>
<evidence type="ECO:0000250" key="1"/>
<evidence type="ECO:0000250" key="2">
    <source>
        <dbReference type="UniProtKB" id="P00157"/>
    </source>
</evidence>
<evidence type="ECO:0000255" key="3">
    <source>
        <dbReference type="PROSITE-ProRule" id="PRU00967"/>
    </source>
</evidence>
<evidence type="ECO:0000255" key="4">
    <source>
        <dbReference type="PROSITE-ProRule" id="PRU00968"/>
    </source>
</evidence>
<proteinExistence type="inferred from homology"/>
<keyword id="KW-0249">Electron transport</keyword>
<keyword id="KW-0349">Heme</keyword>
<keyword id="KW-0408">Iron</keyword>
<keyword id="KW-0472">Membrane</keyword>
<keyword id="KW-0479">Metal-binding</keyword>
<keyword id="KW-0496">Mitochondrion</keyword>
<keyword id="KW-0999">Mitochondrion inner membrane</keyword>
<keyword id="KW-0679">Respiratory chain</keyword>
<keyword id="KW-0812">Transmembrane</keyword>
<keyword id="KW-1133">Transmembrane helix</keyword>
<keyword id="KW-0813">Transport</keyword>
<keyword id="KW-0830">Ubiquinone</keyword>
<gene>
    <name type="primary">MT-CYB</name>
    <name type="synonym">COB</name>
    <name type="synonym">CYTB</name>
    <name type="synonym">MTCYB</name>
</gene>
<reference key="1">
    <citation type="journal article" date="1999" name="Syst. Biol.">
        <title>Molecular phylogeny of the marmots (Rodentia: Sciuridae): tests of evolutionary and biogeographic hypotheses.</title>
        <authorList>
            <person name="Steppan S.J."/>
            <person name="Akhverdyan M.R."/>
            <person name="Lyapunova E.A."/>
            <person name="Fraser D.G."/>
            <person name="Vorontsov N.N."/>
            <person name="Hoffmann R.S."/>
            <person name="Braun M.J."/>
        </authorList>
    </citation>
    <scope>NUCLEOTIDE SEQUENCE [GENOMIC DNA]</scope>
    <source>
        <strain>Isolate NMMNH_128</strain>
        <strain>Isolate USNM_575170</strain>
    </source>
</reference>
<name>CYB_MARFL</name>
<geneLocation type="mitochondrion"/>
<sequence length="379" mass="42966">MTNTRKTHPLVKIINHSFIDLPAPSNISTWWNFGSLLGLCLVIQILTGLFLAMHYTSDTLTAFSSVTHICRDVNYGWLIRYMHANGASMFFICLFLHVGRGMYYGSYTYFETWNIGVILLFAVMATAFMGYVLPWGQMSFWGATVITNLLSAIPYIGTTLVEWIWGGFSVDKATLTRFFAFHFVLPFIITALVMVHLLFLHETGSNNPSGLISDSDKIPFHPYYTIKDILGVLLLILILMTLVLFSPDLLGDPDNYTPANPLSTPPHIKPEWYFLFAYAILRSIPNKLGGVLALVLSILILMLFPLLHLSKQRSMMFRPLSQCMFWILVADLFTLTWIGGQPVEYPYIIIGQLASILYFAIILLILPTISLIENKLLKW</sequence>
<dbReference type="EMBL" id="AF143926">
    <property type="protein sequence ID" value="AAD29733.1"/>
    <property type="molecule type" value="Genomic_DNA"/>
</dbReference>
<dbReference type="EMBL" id="AF143927">
    <property type="protein sequence ID" value="AAD29734.1"/>
    <property type="molecule type" value="Genomic_DNA"/>
</dbReference>
<dbReference type="SMR" id="Q9XMC1"/>
<dbReference type="GO" id="GO:0005743">
    <property type="term" value="C:mitochondrial inner membrane"/>
    <property type="evidence" value="ECO:0007669"/>
    <property type="project" value="UniProtKB-SubCell"/>
</dbReference>
<dbReference type="GO" id="GO:0045275">
    <property type="term" value="C:respiratory chain complex III"/>
    <property type="evidence" value="ECO:0007669"/>
    <property type="project" value="InterPro"/>
</dbReference>
<dbReference type="GO" id="GO:0046872">
    <property type="term" value="F:metal ion binding"/>
    <property type="evidence" value="ECO:0007669"/>
    <property type="project" value="UniProtKB-KW"/>
</dbReference>
<dbReference type="GO" id="GO:0008121">
    <property type="term" value="F:ubiquinol-cytochrome-c reductase activity"/>
    <property type="evidence" value="ECO:0007669"/>
    <property type="project" value="InterPro"/>
</dbReference>
<dbReference type="GO" id="GO:0006122">
    <property type="term" value="P:mitochondrial electron transport, ubiquinol to cytochrome c"/>
    <property type="evidence" value="ECO:0007669"/>
    <property type="project" value="TreeGrafter"/>
</dbReference>
<dbReference type="CDD" id="cd00290">
    <property type="entry name" value="cytochrome_b_C"/>
    <property type="match status" value="1"/>
</dbReference>
<dbReference type="CDD" id="cd00284">
    <property type="entry name" value="Cytochrome_b_N"/>
    <property type="match status" value="1"/>
</dbReference>
<dbReference type="FunFam" id="1.20.810.10:FF:000002">
    <property type="entry name" value="Cytochrome b"/>
    <property type="match status" value="1"/>
</dbReference>
<dbReference type="Gene3D" id="1.20.810.10">
    <property type="entry name" value="Cytochrome Bc1 Complex, Chain C"/>
    <property type="match status" value="1"/>
</dbReference>
<dbReference type="InterPro" id="IPR005798">
    <property type="entry name" value="Cyt_b/b6_C"/>
</dbReference>
<dbReference type="InterPro" id="IPR036150">
    <property type="entry name" value="Cyt_b/b6_C_sf"/>
</dbReference>
<dbReference type="InterPro" id="IPR005797">
    <property type="entry name" value="Cyt_b/b6_N"/>
</dbReference>
<dbReference type="InterPro" id="IPR027387">
    <property type="entry name" value="Cytb/b6-like_sf"/>
</dbReference>
<dbReference type="InterPro" id="IPR030689">
    <property type="entry name" value="Cytochrome_b"/>
</dbReference>
<dbReference type="InterPro" id="IPR048260">
    <property type="entry name" value="Cytochrome_b_C_euk/bac"/>
</dbReference>
<dbReference type="InterPro" id="IPR048259">
    <property type="entry name" value="Cytochrome_b_N_euk/bac"/>
</dbReference>
<dbReference type="InterPro" id="IPR016174">
    <property type="entry name" value="Di-haem_cyt_TM"/>
</dbReference>
<dbReference type="PANTHER" id="PTHR19271">
    <property type="entry name" value="CYTOCHROME B"/>
    <property type="match status" value="1"/>
</dbReference>
<dbReference type="PANTHER" id="PTHR19271:SF16">
    <property type="entry name" value="CYTOCHROME B"/>
    <property type="match status" value="1"/>
</dbReference>
<dbReference type="Pfam" id="PF00032">
    <property type="entry name" value="Cytochrom_B_C"/>
    <property type="match status" value="1"/>
</dbReference>
<dbReference type="Pfam" id="PF00033">
    <property type="entry name" value="Cytochrome_B"/>
    <property type="match status" value="1"/>
</dbReference>
<dbReference type="PIRSF" id="PIRSF038885">
    <property type="entry name" value="COB"/>
    <property type="match status" value="1"/>
</dbReference>
<dbReference type="SUPFAM" id="SSF81648">
    <property type="entry name" value="a domain/subunit of cytochrome bc1 complex (Ubiquinol-cytochrome c reductase)"/>
    <property type="match status" value="1"/>
</dbReference>
<dbReference type="SUPFAM" id="SSF81342">
    <property type="entry name" value="Transmembrane di-heme cytochromes"/>
    <property type="match status" value="1"/>
</dbReference>
<dbReference type="PROSITE" id="PS51003">
    <property type="entry name" value="CYTB_CTER"/>
    <property type="match status" value="1"/>
</dbReference>
<dbReference type="PROSITE" id="PS51002">
    <property type="entry name" value="CYTB_NTER"/>
    <property type="match status" value="1"/>
</dbReference>
<protein>
    <recommendedName>
        <fullName>Cytochrome b</fullName>
    </recommendedName>
    <alternativeName>
        <fullName>Complex III subunit 3</fullName>
    </alternativeName>
    <alternativeName>
        <fullName>Complex III subunit III</fullName>
    </alternativeName>
    <alternativeName>
        <fullName>Cytochrome b-c1 complex subunit 3</fullName>
    </alternativeName>
    <alternativeName>
        <fullName>Ubiquinol-cytochrome-c reductase complex cytochrome b subunit</fullName>
    </alternativeName>
</protein>
<accession>Q9XMC1</accession>
<accession>Q9TH49</accession>